<protein>
    <recommendedName>
        <fullName>Uncharacterized lipoprotein MPN_083</fullName>
    </recommendedName>
</protein>
<comment type="subcellular location">
    <subcellularLocation>
        <location evidence="1">Cell membrane</location>
        <topology evidence="1">Lipid-anchor</topology>
    </subcellularLocation>
</comment>
<comment type="similarity">
    <text evidence="3">Belongs to the MG067/MG068/MG395 family.</text>
</comment>
<proteinExistence type="inferred from homology"/>
<name>Y083_MYCPN</name>
<accession>P75610</accession>
<gene>
    <name type="ordered locus">MPN_083</name>
    <name type="ORF">MP072</name>
    <name type="ORF">R02_orf533</name>
</gene>
<evidence type="ECO:0000255" key="1">
    <source>
        <dbReference type="PROSITE-ProRule" id="PRU00303"/>
    </source>
</evidence>
<evidence type="ECO:0000256" key="2">
    <source>
        <dbReference type="SAM" id="MobiDB-lite"/>
    </source>
</evidence>
<evidence type="ECO:0000305" key="3"/>
<keyword id="KW-1003">Cell membrane</keyword>
<keyword id="KW-0449">Lipoprotein</keyword>
<keyword id="KW-0472">Membrane</keyword>
<keyword id="KW-0564">Palmitate</keyword>
<keyword id="KW-1185">Reference proteome</keyword>
<keyword id="KW-0732">Signal</keyword>
<reference key="1">
    <citation type="journal article" date="1996" name="Nucleic Acids Res.">
        <title>Complete sequence analysis of the genome of the bacterium Mycoplasma pneumoniae.</title>
        <authorList>
            <person name="Himmelreich R."/>
            <person name="Hilbert H."/>
            <person name="Plagens H."/>
            <person name="Pirkl E."/>
            <person name="Li B.-C."/>
            <person name="Herrmann R."/>
        </authorList>
    </citation>
    <scope>NUCLEOTIDE SEQUENCE [LARGE SCALE GENOMIC DNA]</scope>
    <source>
        <strain>ATCC 29342 / M129 / Subtype 1</strain>
    </source>
</reference>
<organism>
    <name type="scientific">Mycoplasma pneumoniae (strain ATCC 29342 / M129 / Subtype 1)</name>
    <name type="common">Mycoplasmoides pneumoniae</name>
    <dbReference type="NCBI Taxonomy" id="272634"/>
    <lineage>
        <taxon>Bacteria</taxon>
        <taxon>Bacillati</taxon>
        <taxon>Mycoplasmatota</taxon>
        <taxon>Mycoplasmoidales</taxon>
        <taxon>Mycoplasmoidaceae</taxon>
        <taxon>Mycoplasmoides</taxon>
    </lineage>
</organism>
<sequence>MVKVWKIGFGVFLPTALLFSACSFKDYIPTPSFRKDFSTENNFVKNKVPGKDDIYSKFYDLTFSLNFVNNQAQEFGTGWLIDWKGDENKNLSKNKEGQTASQTRSSSEQTTDQDANLFTAYIATNLHVADGLKNDQDYAPYNKDGWGQPYPYQQKTQSFLLGKYTKPNVQLVKTNYEKPEDAVIEQKLKEDSLLFIQTSTLPKTAYAAIDPVNFSYNPTRTNGFWTAGKYNVYNGGNSIGNYADFAVIEVPLVLSNPNDAKIYQEWIRPATQAYKYLGDVEGLFAKKGYRSYIQDFYHLLGYPVTKNTKSEFILGQSQGTVNHMSFSNDESNTTNTITKASLTQQPHKEQSAYVVRESGLPTLTMNVDKYTGAKGTHLVNVDQITDLSLGDGLIDFGGLSRFILQYHNVNYKQFGYGTILWDTNFGGGSSGSAIFNQNKQINSIYFGALVNVTTDRNENVGLGLGQILRAPNTFNSSHEVPYSYDLIFGDVNTTNFYAQFAKKHNTHMWSKIQSTQNGEIGFHKNSKTGQQRH</sequence>
<dbReference type="EMBL" id="U00089">
    <property type="protein sequence ID" value="AAB95720.1"/>
    <property type="molecule type" value="Genomic_DNA"/>
</dbReference>
<dbReference type="PIR" id="S73398">
    <property type="entry name" value="S73398"/>
</dbReference>
<dbReference type="RefSeq" id="NP_109771.1">
    <property type="nucleotide sequence ID" value="NC_000912.1"/>
</dbReference>
<dbReference type="RefSeq" id="WP_010874440.1">
    <property type="nucleotide sequence ID" value="NC_000912.1"/>
</dbReference>
<dbReference type="IntAct" id="P75610">
    <property type="interactions" value="1"/>
</dbReference>
<dbReference type="STRING" id="272634.MPN_083"/>
<dbReference type="EnsemblBacteria" id="AAB95720">
    <property type="protein sequence ID" value="AAB95720"/>
    <property type="gene ID" value="MPN_083"/>
</dbReference>
<dbReference type="KEGG" id="mpn:MPN_083"/>
<dbReference type="PATRIC" id="fig|272634.6.peg.85"/>
<dbReference type="HOGENOM" id="CLU_038569_1_0_14"/>
<dbReference type="OrthoDB" id="398874at2"/>
<dbReference type="BioCyc" id="MPNE272634:G1GJ3-130-MONOMER"/>
<dbReference type="Proteomes" id="UP000000808">
    <property type="component" value="Chromosome"/>
</dbReference>
<dbReference type="GO" id="GO:0005886">
    <property type="term" value="C:plasma membrane"/>
    <property type="evidence" value="ECO:0007669"/>
    <property type="project" value="UniProtKB-SubCell"/>
</dbReference>
<dbReference type="InterPro" id="IPR022382">
    <property type="entry name" value="Mycoplasma_peptidase_DUF31"/>
</dbReference>
<dbReference type="InterPro" id="IPR009003">
    <property type="entry name" value="Peptidase_S1_PA"/>
</dbReference>
<dbReference type="InterPro" id="IPR022381">
    <property type="entry name" value="Uncharacterised_MG067"/>
</dbReference>
<dbReference type="Pfam" id="PF01732">
    <property type="entry name" value="Mycop_pep_DUF31"/>
    <property type="match status" value="1"/>
</dbReference>
<dbReference type="PRINTS" id="PR00840">
    <property type="entry name" value="Y06768FAMILY"/>
</dbReference>
<dbReference type="SUPFAM" id="SSF50494">
    <property type="entry name" value="Trypsin-like serine proteases"/>
    <property type="match status" value="1"/>
</dbReference>
<dbReference type="PROSITE" id="PS51257">
    <property type="entry name" value="PROKAR_LIPOPROTEIN"/>
    <property type="match status" value="1"/>
</dbReference>
<feature type="signal peptide" evidence="1">
    <location>
        <begin position="1"/>
        <end position="21"/>
    </location>
</feature>
<feature type="chain" id="PRO_0000018738" description="Uncharacterized lipoprotein MPN_083">
    <location>
        <begin position="22"/>
        <end position="533"/>
    </location>
</feature>
<feature type="region of interest" description="Disordered" evidence="2">
    <location>
        <begin position="91"/>
        <end position="111"/>
    </location>
</feature>
<feature type="compositionally biased region" description="Polar residues" evidence="2">
    <location>
        <begin position="97"/>
        <end position="111"/>
    </location>
</feature>
<feature type="lipid moiety-binding region" description="N-palmitoyl cysteine" evidence="1">
    <location>
        <position position="22"/>
    </location>
</feature>
<feature type="lipid moiety-binding region" description="S-diacylglycerol cysteine" evidence="1">
    <location>
        <position position="22"/>
    </location>
</feature>